<reference key="1">
    <citation type="journal article" date="1992" name="Plant Mol. Biol.">
        <title>Nucleotide sequence of atpB, rbcL, trnR, dedB and psaI chloroplast genes from a fern Angiopteris lygodiifolia: a possible emergence of Spermatophyta lineage before the separation of Bryophyta and Pteridophyta.</title>
        <authorList>
            <person name="Yoshinaga K."/>
            <person name="Kubota Y."/>
            <person name="Ishii T."/>
            <person name="Wada K."/>
        </authorList>
    </citation>
    <scope>NUCLEOTIDE SEQUENCE [GENOMIC DNA]</scope>
    <source>
        <strain>Rosenstock</strain>
    </source>
</reference>
<feature type="chain" id="PRO_0000144494" description="ATP synthase subunit beta, chloroplastic">
    <location>
        <begin position="1"/>
        <end position="492"/>
    </location>
</feature>
<feature type="binding site" evidence="1">
    <location>
        <begin position="170"/>
        <end position="177"/>
    </location>
    <ligand>
        <name>ATP</name>
        <dbReference type="ChEBI" id="CHEBI:30616"/>
    </ligand>
</feature>
<evidence type="ECO:0000255" key="1">
    <source>
        <dbReference type="HAMAP-Rule" id="MF_01347"/>
    </source>
</evidence>
<keyword id="KW-0066">ATP synthesis</keyword>
<keyword id="KW-0067">ATP-binding</keyword>
<keyword id="KW-0139">CF(1)</keyword>
<keyword id="KW-0150">Chloroplast</keyword>
<keyword id="KW-0375">Hydrogen ion transport</keyword>
<keyword id="KW-0406">Ion transport</keyword>
<keyword id="KW-0472">Membrane</keyword>
<keyword id="KW-0547">Nucleotide-binding</keyword>
<keyword id="KW-0934">Plastid</keyword>
<keyword id="KW-0793">Thylakoid</keyword>
<keyword id="KW-1278">Translocase</keyword>
<keyword id="KW-0813">Transport</keyword>
<sequence>MKTNPLVFVVSTAVEKNAGYITQIIGPVLDVAFSPGKLPNIYNSLIVKGQNPAGQEINVTCEVQQLLGNDRVRAVAMSATDGLMRGMKVIDTGAPLSVPVGEVTLGRIFNVLGEPVDNLGPVDAGTTSPIHKSAPAFTQLDTKLSIFETGIKVVDLLAPYRRGGKIGLFGGAGVGKTVLIMELINNIAKAHGGVSVFGGVGERTREGNDLYMEMKESKVINQENISESKVALVYGQMNEPPGARMRVGLTALTMAEYFRDVNKQDVLLFIDNIFRFVQAGSEVSASSGRMPSAVGYQPTLATEMGSLQERITSTKEGSITSIQAVYVPADDLTDPAPATTFAHSDATTVLSRGLAAKGIYPAVDPLDSTSTMLQPWIVGEEHYETAQGVKQTLQRYKELQDIIAILGLDELSEEDRLTVARARKIERFLSQPFFVAEVFTGSPGKYVSLIETIKGFQMILSGELDSLPEQAFYLVGNIDEATAKAATLQVES</sequence>
<accession>P28250</accession>
<gene>
    <name evidence="1" type="primary">atpB</name>
</gene>
<geneLocation type="chloroplast"/>
<name>ATPB_ANGLY</name>
<comment type="function">
    <text evidence="1">Produces ATP from ADP in the presence of a proton gradient across the membrane. The catalytic sites are hosted primarily by the beta subunits.</text>
</comment>
<comment type="catalytic activity">
    <reaction evidence="1">
        <text>ATP + H2O + 4 H(+)(in) = ADP + phosphate + 5 H(+)(out)</text>
        <dbReference type="Rhea" id="RHEA:57720"/>
        <dbReference type="ChEBI" id="CHEBI:15377"/>
        <dbReference type="ChEBI" id="CHEBI:15378"/>
        <dbReference type="ChEBI" id="CHEBI:30616"/>
        <dbReference type="ChEBI" id="CHEBI:43474"/>
        <dbReference type="ChEBI" id="CHEBI:456216"/>
        <dbReference type="EC" id="7.1.2.2"/>
    </reaction>
</comment>
<comment type="subunit">
    <text evidence="1">F-type ATPases have 2 components, CF(1) - the catalytic core - and CF(0) - the membrane proton channel. CF(1) has five subunits: alpha(3), beta(3), gamma(1), delta(1), epsilon(1). CF(0) has four main subunits: a(1), b(1), b'(1) and c(9-12).</text>
</comment>
<comment type="subcellular location">
    <subcellularLocation>
        <location evidence="1">Plastid</location>
        <location evidence="1">Chloroplast thylakoid membrane</location>
        <topology evidence="1">Peripheral membrane protein</topology>
    </subcellularLocation>
</comment>
<comment type="similarity">
    <text evidence="1">Belongs to the ATPase alpha/beta chains family.</text>
</comment>
<proteinExistence type="inferred from homology"/>
<organism>
    <name type="scientific">Angiopteris lygodiifolia</name>
    <name type="common">Turnip fern</name>
    <dbReference type="NCBI Taxonomy" id="3267"/>
    <lineage>
        <taxon>Eukaryota</taxon>
        <taxon>Viridiplantae</taxon>
        <taxon>Streptophyta</taxon>
        <taxon>Embryophyta</taxon>
        <taxon>Tracheophyta</taxon>
        <taxon>Polypodiopsida</taxon>
        <taxon>Marattiidae</taxon>
        <taxon>Marattiales</taxon>
        <taxon>Marattiaceae</taxon>
        <taxon>Angiopteris</taxon>
    </lineage>
</organism>
<protein>
    <recommendedName>
        <fullName evidence="1">ATP synthase subunit beta, chloroplastic</fullName>
        <ecNumber evidence="1">7.1.2.2</ecNumber>
    </recommendedName>
    <alternativeName>
        <fullName evidence="1">ATP synthase F1 sector subunit beta</fullName>
    </alternativeName>
    <alternativeName>
        <fullName evidence="1">F-ATPase subunit beta</fullName>
    </alternativeName>
</protein>
<dbReference type="EC" id="7.1.2.2" evidence="1"/>
<dbReference type="EMBL" id="X58429">
    <property type="protein sequence ID" value="CAA41331.1"/>
    <property type="molecule type" value="Genomic_DNA"/>
</dbReference>
<dbReference type="PIR" id="S19228">
    <property type="entry name" value="PWFNBT"/>
</dbReference>
<dbReference type="SMR" id="P28250"/>
<dbReference type="GO" id="GO:0009535">
    <property type="term" value="C:chloroplast thylakoid membrane"/>
    <property type="evidence" value="ECO:0007669"/>
    <property type="project" value="UniProtKB-SubCell"/>
</dbReference>
<dbReference type="GO" id="GO:0005739">
    <property type="term" value="C:mitochondrion"/>
    <property type="evidence" value="ECO:0007669"/>
    <property type="project" value="GOC"/>
</dbReference>
<dbReference type="GO" id="GO:0045259">
    <property type="term" value="C:proton-transporting ATP synthase complex"/>
    <property type="evidence" value="ECO:0007669"/>
    <property type="project" value="UniProtKB-KW"/>
</dbReference>
<dbReference type="GO" id="GO:0005524">
    <property type="term" value="F:ATP binding"/>
    <property type="evidence" value="ECO:0007669"/>
    <property type="project" value="UniProtKB-UniRule"/>
</dbReference>
<dbReference type="GO" id="GO:0016887">
    <property type="term" value="F:ATP hydrolysis activity"/>
    <property type="evidence" value="ECO:0007669"/>
    <property type="project" value="InterPro"/>
</dbReference>
<dbReference type="GO" id="GO:0046933">
    <property type="term" value="F:proton-transporting ATP synthase activity, rotational mechanism"/>
    <property type="evidence" value="ECO:0007669"/>
    <property type="project" value="UniProtKB-UniRule"/>
</dbReference>
<dbReference type="GO" id="GO:0042776">
    <property type="term" value="P:proton motive force-driven mitochondrial ATP synthesis"/>
    <property type="evidence" value="ECO:0007669"/>
    <property type="project" value="TreeGrafter"/>
</dbReference>
<dbReference type="CDD" id="cd18110">
    <property type="entry name" value="ATP-synt_F1_beta_C"/>
    <property type="match status" value="1"/>
</dbReference>
<dbReference type="CDD" id="cd18115">
    <property type="entry name" value="ATP-synt_F1_beta_N"/>
    <property type="match status" value="1"/>
</dbReference>
<dbReference type="CDD" id="cd01133">
    <property type="entry name" value="F1-ATPase_beta_CD"/>
    <property type="match status" value="1"/>
</dbReference>
<dbReference type="FunFam" id="1.10.1140.10:FF:000001">
    <property type="entry name" value="ATP synthase subunit beta"/>
    <property type="match status" value="1"/>
</dbReference>
<dbReference type="FunFam" id="3.40.50.12240:FF:000006">
    <property type="entry name" value="ATP synthase subunit beta"/>
    <property type="match status" value="1"/>
</dbReference>
<dbReference type="FunFam" id="3.40.50.300:FF:000004">
    <property type="entry name" value="ATP synthase subunit beta"/>
    <property type="match status" value="1"/>
</dbReference>
<dbReference type="FunFam" id="2.40.10.170:FF:000002">
    <property type="entry name" value="ATP synthase subunit beta, chloroplastic"/>
    <property type="match status" value="1"/>
</dbReference>
<dbReference type="Gene3D" id="2.40.10.170">
    <property type="match status" value="1"/>
</dbReference>
<dbReference type="Gene3D" id="1.10.1140.10">
    <property type="entry name" value="Bovine Mitochondrial F1-atpase, Atp Synthase Beta Chain, Chain D, domain 3"/>
    <property type="match status" value="1"/>
</dbReference>
<dbReference type="Gene3D" id="3.40.50.300">
    <property type="entry name" value="P-loop containing nucleotide triphosphate hydrolases"/>
    <property type="match status" value="1"/>
</dbReference>
<dbReference type="HAMAP" id="MF_01347">
    <property type="entry name" value="ATP_synth_beta_bact"/>
    <property type="match status" value="1"/>
</dbReference>
<dbReference type="InterPro" id="IPR003593">
    <property type="entry name" value="AAA+_ATPase"/>
</dbReference>
<dbReference type="InterPro" id="IPR055190">
    <property type="entry name" value="ATP-synt_VA_C"/>
</dbReference>
<dbReference type="InterPro" id="IPR005722">
    <property type="entry name" value="ATP_synth_F1_bsu"/>
</dbReference>
<dbReference type="InterPro" id="IPR020003">
    <property type="entry name" value="ATPase_a/bsu_AS"/>
</dbReference>
<dbReference type="InterPro" id="IPR050053">
    <property type="entry name" value="ATPase_alpha/beta_chains"/>
</dbReference>
<dbReference type="InterPro" id="IPR004100">
    <property type="entry name" value="ATPase_F1/V1/A1_a/bsu_N"/>
</dbReference>
<dbReference type="InterPro" id="IPR036121">
    <property type="entry name" value="ATPase_F1/V1/A1_a/bsu_N_sf"/>
</dbReference>
<dbReference type="InterPro" id="IPR000194">
    <property type="entry name" value="ATPase_F1/V1/A1_a/bsu_nucl-bd"/>
</dbReference>
<dbReference type="InterPro" id="IPR024034">
    <property type="entry name" value="ATPase_F1/V1_b/a_C"/>
</dbReference>
<dbReference type="InterPro" id="IPR027417">
    <property type="entry name" value="P-loop_NTPase"/>
</dbReference>
<dbReference type="NCBIfam" id="TIGR01039">
    <property type="entry name" value="atpD"/>
    <property type="match status" value="1"/>
</dbReference>
<dbReference type="PANTHER" id="PTHR15184">
    <property type="entry name" value="ATP SYNTHASE"/>
    <property type="match status" value="1"/>
</dbReference>
<dbReference type="PANTHER" id="PTHR15184:SF71">
    <property type="entry name" value="ATP SYNTHASE SUBUNIT BETA, MITOCHONDRIAL"/>
    <property type="match status" value="1"/>
</dbReference>
<dbReference type="Pfam" id="PF00006">
    <property type="entry name" value="ATP-synt_ab"/>
    <property type="match status" value="1"/>
</dbReference>
<dbReference type="Pfam" id="PF02874">
    <property type="entry name" value="ATP-synt_ab_N"/>
    <property type="match status" value="1"/>
</dbReference>
<dbReference type="Pfam" id="PF22919">
    <property type="entry name" value="ATP-synt_VA_C"/>
    <property type="match status" value="1"/>
</dbReference>
<dbReference type="SMART" id="SM00382">
    <property type="entry name" value="AAA"/>
    <property type="match status" value="1"/>
</dbReference>
<dbReference type="SUPFAM" id="SSF47917">
    <property type="entry name" value="C-terminal domain of alpha and beta subunits of F1 ATP synthase"/>
    <property type="match status" value="1"/>
</dbReference>
<dbReference type="SUPFAM" id="SSF50615">
    <property type="entry name" value="N-terminal domain of alpha and beta subunits of F1 ATP synthase"/>
    <property type="match status" value="1"/>
</dbReference>
<dbReference type="SUPFAM" id="SSF52540">
    <property type="entry name" value="P-loop containing nucleoside triphosphate hydrolases"/>
    <property type="match status" value="1"/>
</dbReference>
<dbReference type="PROSITE" id="PS00152">
    <property type="entry name" value="ATPASE_ALPHA_BETA"/>
    <property type="match status" value="1"/>
</dbReference>